<proteinExistence type="inferred from homology"/>
<name>PTPH2_MDBVW</name>
<organism>
    <name type="scientific">Microplitis demolitor bracovirus (isolate Webb)</name>
    <name type="common">MdBV</name>
    <dbReference type="NCBI Taxonomy" id="654919"/>
    <lineage>
        <taxon>Viruses</taxon>
        <taxon>Viruses incertae sedis</taxon>
        <taxon>Polydnaviriformidae</taxon>
        <taxon>Bracoviriform</taxon>
        <taxon>Microplitis demolitor bracovirus</taxon>
    </lineage>
</organism>
<accession>Q5I146</accession>
<gene>
    <name type="primary">H2</name>
</gene>
<sequence>MSRCKFRSLNYSEFLNLVEKSDFEEVVTREHEKIMAQKVDGTFNESMKLENRKLNRYLDMLCFDHTRVTLPAEKNRGDYINANYVDGYEYKKKFICTQAPLQQTAYDFWRTVWMHHTRIIVMMCKKKENRKQCFAYWNDIEGGDIVFGKFKITTTQIETHLSYIETTLLVTDGTSAIQEVTHFVFTQWPDYGVPNDVMNLLNFILTVKSAQKDVIRQLAQERFKIGDNPPPIVVHCSAGVGRTGAYCLLDSAISEFDACATISIPSTLINIRNQRYYCIFILPQYFFCYRVMERYVNLTVNKVSKKLIANVATALFNKVLHLKDN</sequence>
<keyword id="KW-1073">Activation of host caspases by virus</keyword>
<keyword id="KW-1035">Host cytoplasm</keyword>
<keyword id="KW-0945">Host-virus interaction</keyword>
<keyword id="KW-0378">Hydrolase</keyword>
<keyword id="KW-1090">Inhibition of host innate immune response by virus</keyword>
<keyword id="KW-1119">Modulation of host cell apoptosis by virus</keyword>
<keyword id="KW-0904">Protein phosphatase</keyword>
<keyword id="KW-1185">Reference proteome</keyword>
<keyword id="KW-0899">Viral immunoevasion</keyword>
<organismHost>
    <name type="scientific">Microplitis demolitor</name>
    <name type="common">Parasitoid wasp</name>
    <dbReference type="NCBI Taxonomy" id="69319"/>
</organismHost>
<feature type="chain" id="PRO_0000405352" description="Tyrosine phosphatase H2">
    <location>
        <begin position="1"/>
        <end position="325"/>
    </location>
</feature>
<feature type="domain" description="Tyrosine-protein phosphatase" evidence="1">
    <location>
        <begin position="27"/>
        <end position="295"/>
    </location>
</feature>
<feature type="active site" description="Phosphocysteine intermediate" evidence="1 2">
    <location>
        <position position="236"/>
    </location>
</feature>
<dbReference type="EC" id="3.1.3.48"/>
<dbReference type="EMBL" id="AY875685">
    <property type="protein sequence ID" value="AAW51786.1"/>
    <property type="molecule type" value="Genomic_DNA"/>
</dbReference>
<dbReference type="RefSeq" id="YP_239382.1">
    <property type="nucleotide sequence ID" value="NC_007035.1"/>
</dbReference>
<dbReference type="SMR" id="Q5I146"/>
<dbReference type="KEGG" id="vg:5075819"/>
<dbReference type="Proteomes" id="UP000008168">
    <property type="component" value="Genome"/>
</dbReference>
<dbReference type="GO" id="GO:0030430">
    <property type="term" value="C:host cell cytoplasm"/>
    <property type="evidence" value="ECO:0007669"/>
    <property type="project" value="UniProtKB-SubCell"/>
</dbReference>
<dbReference type="GO" id="GO:0004725">
    <property type="term" value="F:protein tyrosine phosphatase activity"/>
    <property type="evidence" value="ECO:0007669"/>
    <property type="project" value="UniProtKB-EC"/>
</dbReference>
<dbReference type="GO" id="GO:0052151">
    <property type="term" value="P:symbiont-mediated activation of host apoptosis"/>
    <property type="evidence" value="ECO:0007669"/>
    <property type="project" value="UniProtKB-KW"/>
</dbReference>
<dbReference type="GO" id="GO:0052170">
    <property type="term" value="P:symbiont-mediated suppression of host innate immune response"/>
    <property type="evidence" value="ECO:0007669"/>
    <property type="project" value="UniProtKB-KW"/>
</dbReference>
<dbReference type="Gene3D" id="3.90.190.10">
    <property type="entry name" value="Protein tyrosine phosphatase superfamily"/>
    <property type="match status" value="1"/>
</dbReference>
<dbReference type="InterPro" id="IPR029021">
    <property type="entry name" value="Prot-tyrosine_phosphatase-like"/>
</dbReference>
<dbReference type="InterPro" id="IPR050348">
    <property type="entry name" value="Protein-Tyr_Phosphatase"/>
</dbReference>
<dbReference type="InterPro" id="IPR000242">
    <property type="entry name" value="PTP_cat"/>
</dbReference>
<dbReference type="InterPro" id="IPR016130">
    <property type="entry name" value="Tyr_Pase_AS"/>
</dbReference>
<dbReference type="InterPro" id="IPR003595">
    <property type="entry name" value="Tyr_Pase_cat"/>
</dbReference>
<dbReference type="InterPro" id="IPR000387">
    <property type="entry name" value="Tyr_Pase_dom"/>
</dbReference>
<dbReference type="PANTHER" id="PTHR19134:SF534">
    <property type="entry name" value="LD27988P"/>
    <property type="match status" value="1"/>
</dbReference>
<dbReference type="PANTHER" id="PTHR19134">
    <property type="entry name" value="RECEPTOR-TYPE TYROSINE-PROTEIN PHOSPHATASE"/>
    <property type="match status" value="1"/>
</dbReference>
<dbReference type="Pfam" id="PF00102">
    <property type="entry name" value="Y_phosphatase"/>
    <property type="match status" value="1"/>
</dbReference>
<dbReference type="PRINTS" id="PR00700">
    <property type="entry name" value="PRTYPHPHTASE"/>
</dbReference>
<dbReference type="SMART" id="SM00194">
    <property type="entry name" value="PTPc"/>
    <property type="match status" value="1"/>
</dbReference>
<dbReference type="SMART" id="SM00404">
    <property type="entry name" value="PTPc_motif"/>
    <property type="match status" value="1"/>
</dbReference>
<dbReference type="SUPFAM" id="SSF52799">
    <property type="entry name" value="(Phosphotyrosine protein) phosphatases II"/>
    <property type="match status" value="1"/>
</dbReference>
<dbReference type="PROSITE" id="PS00383">
    <property type="entry name" value="TYR_PHOSPHATASE_1"/>
    <property type="match status" value="1"/>
</dbReference>
<dbReference type="PROSITE" id="PS50056">
    <property type="entry name" value="TYR_PHOSPHATASE_2"/>
    <property type="match status" value="1"/>
</dbReference>
<dbReference type="PROSITE" id="PS50055">
    <property type="entry name" value="TYR_PHOSPHATASE_PTP"/>
    <property type="match status" value="1"/>
</dbReference>
<protein>
    <recommendedName>
        <fullName>Tyrosine phosphatase H2</fullName>
        <shortName>PTP-H2</shortName>
        <ecNumber>3.1.3.48</ecNumber>
    </recommendedName>
</protein>
<comment type="function">
    <text evidence="3 4">Suppresses host immune cell adhesion and phagocytosis. Triggers host mitochondrial membrane depolarization and caspase-dependent apoptosis.</text>
</comment>
<comment type="catalytic activity">
    <reaction evidence="2">
        <text>O-phospho-L-tyrosyl-[protein] + H2O = L-tyrosyl-[protein] + phosphate</text>
        <dbReference type="Rhea" id="RHEA:10684"/>
        <dbReference type="Rhea" id="RHEA-COMP:10136"/>
        <dbReference type="Rhea" id="RHEA-COMP:20101"/>
        <dbReference type="ChEBI" id="CHEBI:15377"/>
        <dbReference type="ChEBI" id="CHEBI:43474"/>
        <dbReference type="ChEBI" id="CHEBI:46858"/>
        <dbReference type="ChEBI" id="CHEBI:61978"/>
        <dbReference type="EC" id="3.1.3.48"/>
    </reaction>
</comment>
<comment type="subcellular location">
    <subcellularLocation>
        <location evidence="5">Host cytoplasm</location>
    </subcellularLocation>
</comment>
<comment type="similarity">
    <text evidence="6">Belongs to the protein-tyrosine phosphatase family.</text>
</comment>
<evidence type="ECO:0000255" key="1">
    <source>
        <dbReference type="PROSITE-ProRule" id="PRU00160"/>
    </source>
</evidence>
<evidence type="ECO:0000255" key="2">
    <source>
        <dbReference type="PROSITE-ProRule" id="PRU10044"/>
    </source>
</evidence>
<evidence type="ECO:0000269" key="3">
    <source>
    </source>
</evidence>
<evidence type="ECO:0000269" key="4">
    <source>
    </source>
</evidence>
<evidence type="ECO:0000269" key="5">
    <source>
    </source>
</evidence>
<evidence type="ECO:0000305" key="6"/>
<reference key="1">
    <citation type="journal article" date="2006" name="Virology">
        <title>Polydnavirus genomes reflect their dual roles as mutualists and pathogens.</title>
        <authorList>
            <person name="Webb B.A."/>
            <person name="Strand M.R."/>
            <person name="Dickey S.E."/>
            <person name="Beck M.H."/>
            <person name="Hilgarth R.S."/>
            <person name="Barney W.E."/>
            <person name="Kadash K."/>
            <person name="Kroemer J.A."/>
            <person name="Lindstrom K.G."/>
            <person name="Rattanadechakul W."/>
            <person name="Shelby K.S."/>
            <person name="Thoetkiattikul H."/>
            <person name="Turnbull M.W."/>
            <person name="Witherell R.A."/>
        </authorList>
    </citation>
    <scope>NUCLEOTIDE SEQUENCE [GENOMIC DNA]</scope>
</reference>
<reference key="2">
    <citation type="journal article" date="2007" name="J. Virol.">
        <title>PTP-H2 and PTP-H3 from Microplitis demolitor Bracovirus localize to focal adhesions and are antiphagocytic in insect immune cells.</title>
        <authorList>
            <person name="Pruijssers A.J."/>
            <person name="Strand M.R."/>
        </authorList>
    </citation>
    <scope>FUNCTION</scope>
</reference>
<reference key="3">
    <citation type="journal article" date="2008" name="J. Gen. Virol.">
        <title>Protein tyrosine phosphatase-H2 from a polydnavirus induces apoptosis of insect cells.</title>
        <authorList>
            <person name="Suderman R.J."/>
            <person name="Pruijssers A.J."/>
            <person name="Strand M.R."/>
        </authorList>
    </citation>
    <scope>FUNCTION</scope>
</reference>
<reference key="4">
    <citation type="journal article" date="2010" name="Insect Biochem. Mol. Biol.">
        <title>Characterization and kinetic analysis of protein tyrosine phosphatase-H2 from Microplitis demolitor bracovirus.</title>
        <authorList>
            <person name="Eum J.H."/>
            <person name="Bottjen R.C."/>
            <person name="Pruijssers A.J."/>
            <person name="Clark K.D."/>
            <person name="Strand M.R."/>
        </authorList>
    </citation>
    <scope>SUBCELLULAR LOCATION</scope>
</reference>